<protein>
    <recommendedName>
        <fullName evidence="1">Small ribosomal subunit protein bS16</fullName>
    </recommendedName>
    <alternativeName>
        <fullName evidence="2">30S ribosomal protein S16</fullName>
    </alternativeName>
</protein>
<dbReference type="EMBL" id="CU468230">
    <property type="protein sequence ID" value="CAO99720.1"/>
    <property type="molecule type" value="Genomic_DNA"/>
</dbReference>
<dbReference type="SMR" id="B0VQ56"/>
<dbReference type="KEGG" id="abm:ABSDF0326"/>
<dbReference type="HOGENOM" id="CLU_100590_5_1_6"/>
<dbReference type="Proteomes" id="UP000001741">
    <property type="component" value="Chromosome"/>
</dbReference>
<dbReference type="GO" id="GO:0005737">
    <property type="term" value="C:cytoplasm"/>
    <property type="evidence" value="ECO:0007669"/>
    <property type="project" value="UniProtKB-ARBA"/>
</dbReference>
<dbReference type="GO" id="GO:0015935">
    <property type="term" value="C:small ribosomal subunit"/>
    <property type="evidence" value="ECO:0007669"/>
    <property type="project" value="TreeGrafter"/>
</dbReference>
<dbReference type="GO" id="GO:0003735">
    <property type="term" value="F:structural constituent of ribosome"/>
    <property type="evidence" value="ECO:0007669"/>
    <property type="project" value="InterPro"/>
</dbReference>
<dbReference type="GO" id="GO:0006412">
    <property type="term" value="P:translation"/>
    <property type="evidence" value="ECO:0007669"/>
    <property type="project" value="UniProtKB-UniRule"/>
</dbReference>
<dbReference type="FunFam" id="3.30.1320.10:FF:000001">
    <property type="entry name" value="30S ribosomal protein S16"/>
    <property type="match status" value="1"/>
</dbReference>
<dbReference type="Gene3D" id="3.30.1320.10">
    <property type="match status" value="1"/>
</dbReference>
<dbReference type="HAMAP" id="MF_00385">
    <property type="entry name" value="Ribosomal_bS16"/>
    <property type="match status" value="1"/>
</dbReference>
<dbReference type="InterPro" id="IPR000307">
    <property type="entry name" value="Ribosomal_bS16"/>
</dbReference>
<dbReference type="InterPro" id="IPR020592">
    <property type="entry name" value="Ribosomal_bS16_CS"/>
</dbReference>
<dbReference type="InterPro" id="IPR023803">
    <property type="entry name" value="Ribosomal_bS16_dom_sf"/>
</dbReference>
<dbReference type="NCBIfam" id="TIGR00002">
    <property type="entry name" value="S16"/>
    <property type="match status" value="1"/>
</dbReference>
<dbReference type="PANTHER" id="PTHR12919">
    <property type="entry name" value="30S RIBOSOMAL PROTEIN S16"/>
    <property type="match status" value="1"/>
</dbReference>
<dbReference type="PANTHER" id="PTHR12919:SF20">
    <property type="entry name" value="SMALL RIBOSOMAL SUBUNIT PROTEIN BS16M"/>
    <property type="match status" value="1"/>
</dbReference>
<dbReference type="Pfam" id="PF00886">
    <property type="entry name" value="Ribosomal_S16"/>
    <property type="match status" value="1"/>
</dbReference>
<dbReference type="SUPFAM" id="SSF54565">
    <property type="entry name" value="Ribosomal protein S16"/>
    <property type="match status" value="1"/>
</dbReference>
<dbReference type="PROSITE" id="PS00732">
    <property type="entry name" value="RIBOSOMAL_S16"/>
    <property type="match status" value="1"/>
</dbReference>
<evidence type="ECO:0000255" key="1">
    <source>
        <dbReference type="HAMAP-Rule" id="MF_00385"/>
    </source>
</evidence>
<evidence type="ECO:0000305" key="2"/>
<comment type="similarity">
    <text evidence="1">Belongs to the bacterial ribosomal protein bS16 family.</text>
</comment>
<sequence>MVVIRLARGGAKKRPFYQIVVTDSRNARDGRFIERIGFFNPTAQGQAEKLRLDADRFAHWVSQGAQPSERVASLAAQAKKATA</sequence>
<accession>B0VQ56</accession>
<keyword id="KW-0687">Ribonucleoprotein</keyword>
<keyword id="KW-0689">Ribosomal protein</keyword>
<feature type="chain" id="PRO_1000196313" description="Small ribosomal subunit protein bS16">
    <location>
        <begin position="1"/>
        <end position="83"/>
    </location>
</feature>
<proteinExistence type="inferred from homology"/>
<gene>
    <name evidence="1" type="primary">rpsP</name>
    <name type="ordered locus">ABSDF0326</name>
</gene>
<name>RS16_ACIBS</name>
<reference key="1">
    <citation type="journal article" date="2008" name="PLoS ONE">
        <title>Comparative analysis of Acinetobacters: three genomes for three lifestyles.</title>
        <authorList>
            <person name="Vallenet D."/>
            <person name="Nordmann P."/>
            <person name="Barbe V."/>
            <person name="Poirel L."/>
            <person name="Mangenot S."/>
            <person name="Bataille E."/>
            <person name="Dossat C."/>
            <person name="Gas S."/>
            <person name="Kreimeyer A."/>
            <person name="Lenoble P."/>
            <person name="Oztas S."/>
            <person name="Poulain J."/>
            <person name="Segurens B."/>
            <person name="Robert C."/>
            <person name="Abergel C."/>
            <person name="Claverie J.-M."/>
            <person name="Raoult D."/>
            <person name="Medigue C."/>
            <person name="Weissenbach J."/>
            <person name="Cruveiller S."/>
        </authorList>
    </citation>
    <scope>NUCLEOTIDE SEQUENCE [LARGE SCALE GENOMIC DNA]</scope>
    <source>
        <strain>SDF</strain>
    </source>
</reference>
<organism>
    <name type="scientific">Acinetobacter baumannii (strain SDF)</name>
    <dbReference type="NCBI Taxonomy" id="509170"/>
    <lineage>
        <taxon>Bacteria</taxon>
        <taxon>Pseudomonadati</taxon>
        <taxon>Pseudomonadota</taxon>
        <taxon>Gammaproteobacteria</taxon>
        <taxon>Moraxellales</taxon>
        <taxon>Moraxellaceae</taxon>
        <taxon>Acinetobacter</taxon>
        <taxon>Acinetobacter calcoaceticus/baumannii complex</taxon>
    </lineage>
</organism>